<organism>
    <name type="scientific">Homo sapiens</name>
    <name type="common">Human</name>
    <dbReference type="NCBI Taxonomy" id="9606"/>
    <lineage>
        <taxon>Eukaryota</taxon>
        <taxon>Metazoa</taxon>
        <taxon>Chordata</taxon>
        <taxon>Craniata</taxon>
        <taxon>Vertebrata</taxon>
        <taxon>Euteleostomi</taxon>
        <taxon>Mammalia</taxon>
        <taxon>Eutheria</taxon>
        <taxon>Euarchontoglires</taxon>
        <taxon>Primates</taxon>
        <taxon>Haplorrhini</taxon>
        <taxon>Catarrhini</taxon>
        <taxon>Hominidae</taxon>
        <taxon>Homo</taxon>
    </lineage>
</organism>
<proteinExistence type="evidence at protein level"/>
<reference key="1">
    <citation type="journal article" date="2003" name="Cancer Lett.">
        <title>Neuroblastoma oligo-capping cDNA project: toward the understanding of the genesis and biology of neuroblastoma.</title>
        <authorList>
            <person name="Ohira M."/>
            <person name="Morohashi A."/>
            <person name="Nakamura Y."/>
            <person name="Isogai E."/>
            <person name="Furuya K."/>
            <person name="Hamano S."/>
            <person name="Machida T."/>
            <person name="Aoyama M."/>
            <person name="Fukumura M."/>
            <person name="Miyazaki K."/>
            <person name="Suzuki Y."/>
            <person name="Sugano S."/>
            <person name="Hirato J."/>
            <person name="Nakagawara A."/>
        </authorList>
    </citation>
    <scope>NUCLEOTIDE SEQUENCE [LARGE SCALE MRNA]</scope>
    <source>
        <tissue>Neuroblastoma</tissue>
    </source>
</reference>
<reference key="2">
    <citation type="journal article" date="2004" name="Nat. Genet.">
        <title>Complete sequencing and characterization of 21,243 full-length human cDNAs.</title>
        <authorList>
            <person name="Ota T."/>
            <person name="Suzuki Y."/>
            <person name="Nishikawa T."/>
            <person name="Otsuki T."/>
            <person name="Sugiyama T."/>
            <person name="Irie R."/>
            <person name="Wakamatsu A."/>
            <person name="Hayashi K."/>
            <person name="Sato H."/>
            <person name="Nagai K."/>
            <person name="Kimura K."/>
            <person name="Makita H."/>
            <person name="Sekine M."/>
            <person name="Obayashi M."/>
            <person name="Nishi T."/>
            <person name="Shibahara T."/>
            <person name="Tanaka T."/>
            <person name="Ishii S."/>
            <person name="Yamamoto J."/>
            <person name="Saito K."/>
            <person name="Kawai Y."/>
            <person name="Isono Y."/>
            <person name="Nakamura Y."/>
            <person name="Nagahari K."/>
            <person name="Murakami K."/>
            <person name="Yasuda T."/>
            <person name="Iwayanagi T."/>
            <person name="Wagatsuma M."/>
            <person name="Shiratori A."/>
            <person name="Sudo H."/>
            <person name="Hosoiri T."/>
            <person name="Kaku Y."/>
            <person name="Kodaira H."/>
            <person name="Kondo H."/>
            <person name="Sugawara M."/>
            <person name="Takahashi M."/>
            <person name="Kanda K."/>
            <person name="Yokoi T."/>
            <person name="Furuya T."/>
            <person name="Kikkawa E."/>
            <person name="Omura Y."/>
            <person name="Abe K."/>
            <person name="Kamihara K."/>
            <person name="Katsuta N."/>
            <person name="Sato K."/>
            <person name="Tanikawa M."/>
            <person name="Yamazaki M."/>
            <person name="Ninomiya K."/>
            <person name="Ishibashi T."/>
            <person name="Yamashita H."/>
            <person name="Murakawa K."/>
            <person name="Fujimori K."/>
            <person name="Tanai H."/>
            <person name="Kimata M."/>
            <person name="Watanabe M."/>
            <person name="Hiraoka S."/>
            <person name="Chiba Y."/>
            <person name="Ishida S."/>
            <person name="Ono Y."/>
            <person name="Takiguchi S."/>
            <person name="Watanabe S."/>
            <person name="Yosida M."/>
            <person name="Hotuta T."/>
            <person name="Kusano J."/>
            <person name="Kanehori K."/>
            <person name="Takahashi-Fujii A."/>
            <person name="Hara H."/>
            <person name="Tanase T.-O."/>
            <person name="Nomura Y."/>
            <person name="Togiya S."/>
            <person name="Komai F."/>
            <person name="Hara R."/>
            <person name="Takeuchi K."/>
            <person name="Arita M."/>
            <person name="Imose N."/>
            <person name="Musashino K."/>
            <person name="Yuuki H."/>
            <person name="Oshima A."/>
            <person name="Sasaki N."/>
            <person name="Aotsuka S."/>
            <person name="Yoshikawa Y."/>
            <person name="Matsunawa H."/>
            <person name="Ichihara T."/>
            <person name="Shiohata N."/>
            <person name="Sano S."/>
            <person name="Moriya S."/>
            <person name="Momiyama H."/>
            <person name="Satoh N."/>
            <person name="Takami S."/>
            <person name="Terashima Y."/>
            <person name="Suzuki O."/>
            <person name="Nakagawa S."/>
            <person name="Senoh A."/>
            <person name="Mizoguchi H."/>
            <person name="Goto Y."/>
            <person name="Shimizu F."/>
            <person name="Wakebe H."/>
            <person name="Hishigaki H."/>
            <person name="Watanabe T."/>
            <person name="Sugiyama A."/>
            <person name="Takemoto M."/>
            <person name="Kawakami B."/>
            <person name="Yamazaki M."/>
            <person name="Watanabe K."/>
            <person name="Kumagai A."/>
            <person name="Itakura S."/>
            <person name="Fukuzumi Y."/>
            <person name="Fujimori Y."/>
            <person name="Komiyama M."/>
            <person name="Tashiro H."/>
            <person name="Tanigami A."/>
            <person name="Fujiwara T."/>
            <person name="Ono T."/>
            <person name="Yamada K."/>
            <person name="Fujii Y."/>
            <person name="Ozaki K."/>
            <person name="Hirao M."/>
            <person name="Ohmori Y."/>
            <person name="Kawabata A."/>
            <person name="Hikiji T."/>
            <person name="Kobatake N."/>
            <person name="Inagaki H."/>
            <person name="Ikema Y."/>
            <person name="Okamoto S."/>
            <person name="Okitani R."/>
            <person name="Kawakami T."/>
            <person name="Noguchi S."/>
            <person name="Itoh T."/>
            <person name="Shigeta K."/>
            <person name="Senba T."/>
            <person name="Matsumura K."/>
            <person name="Nakajima Y."/>
            <person name="Mizuno T."/>
            <person name="Morinaga M."/>
            <person name="Sasaki M."/>
            <person name="Togashi T."/>
            <person name="Oyama M."/>
            <person name="Hata H."/>
            <person name="Watanabe M."/>
            <person name="Komatsu T."/>
            <person name="Mizushima-Sugano J."/>
            <person name="Satoh T."/>
            <person name="Shirai Y."/>
            <person name="Takahashi Y."/>
            <person name="Nakagawa K."/>
            <person name="Okumura K."/>
            <person name="Nagase T."/>
            <person name="Nomura N."/>
            <person name="Kikuchi H."/>
            <person name="Masuho Y."/>
            <person name="Yamashita R."/>
            <person name="Nakai K."/>
            <person name="Yada T."/>
            <person name="Nakamura Y."/>
            <person name="Ohara O."/>
            <person name="Isogai T."/>
            <person name="Sugano S."/>
        </authorList>
    </citation>
    <scope>NUCLEOTIDE SEQUENCE [LARGE SCALE MRNA]</scope>
    <source>
        <tissue>Gastric mucosa</tissue>
    </source>
</reference>
<reference key="3">
    <citation type="journal article" date="2004" name="Genome Res.">
        <title>The status, quality, and expansion of the NIH full-length cDNA project: the Mammalian Gene Collection (MGC).</title>
        <authorList>
            <consortium name="The MGC Project Team"/>
        </authorList>
    </citation>
    <scope>NUCLEOTIDE SEQUENCE [LARGE SCALE MRNA]</scope>
    <source>
        <tissue>Lymph</tissue>
    </source>
</reference>
<reference key="4">
    <citation type="journal article" date="2011" name="BMC Syst. Biol.">
        <title>Initial characterization of the human central proteome.</title>
        <authorList>
            <person name="Burkard T.R."/>
            <person name="Planyavsky M."/>
            <person name="Kaupe I."/>
            <person name="Breitwieser F.P."/>
            <person name="Buerckstuemmer T."/>
            <person name="Bennett K.L."/>
            <person name="Superti-Furga G."/>
            <person name="Colinge J."/>
        </authorList>
    </citation>
    <scope>IDENTIFICATION BY MASS SPECTROMETRY [LARGE SCALE ANALYSIS]</scope>
</reference>
<reference key="5">
    <citation type="journal article" date="2011" name="Cell Struct. Funct.">
        <title>Characterization of YIPF3 and YIPF4, cis-Golgi localizing Yip domain family proteins.</title>
        <authorList>
            <person name="Tanimoto K."/>
            <person name="Suzuki K."/>
            <person name="Jokitalo E."/>
            <person name="Sakai N."/>
            <person name="Sakaguchi T."/>
            <person name="Tamura D."/>
            <person name="Fujii G."/>
            <person name="Aoki K."/>
            <person name="Takada S."/>
            <person name="Ishida R."/>
            <person name="Tanabe M."/>
            <person name="Itoh H."/>
            <person name="Yoneda Y."/>
            <person name="Sohda M."/>
            <person name="Misumi Y."/>
            <person name="Nakamura N."/>
        </authorList>
    </citation>
    <scope>FUNCTION</scope>
    <scope>SUBCELLULAR LOCATION</scope>
    <scope>INTERACTION WITH YIPF3</scope>
</reference>
<reference key="6">
    <citation type="journal article" date="2015" name="Sci. Rep.">
        <title>YIP1 family member 4 (YIPF4) is a novel cellular binding partner of the papillomavirus E5 proteins.</title>
        <authorList>
            <person name="Mueller M."/>
            <person name="Wasson C.W."/>
            <person name="Bhatia R."/>
            <person name="Boxall S."/>
            <person name="Millan D."/>
            <person name="Goh G.Y."/>
            <person name="Haas J."/>
            <person name="Stonehouse N.J."/>
            <person name="Macdonald A."/>
        </authorList>
    </citation>
    <scope>INTERACTION WITH HPV E5 PROTEINS</scope>
    <scope>SUBCELLULAR LOCATION</scope>
    <scope>TISSUE SPECIFICITY</scope>
    <scope>DEVELOPMENTAL STAGE</scope>
</reference>
<reference key="7">
    <citation type="journal article" date="2017" name="Histochem. Cell Biol.">
        <title>Functional characterisation of the YIPF protein family in mammalian cells.</title>
        <authorList>
            <person name="Kranjc T."/>
            <person name="Dempsey E."/>
            <person name="Cagney G."/>
            <person name="Nakamura N."/>
            <person name="Shields D.C."/>
            <person name="Simpson J.C."/>
        </authorList>
    </citation>
    <scope>SUBCELLULAR LOCATION</scope>
    <scope>TOPOLOGY</scope>
    <scope>INTERACTION WITH YIPF3 AND YIPF5</scope>
</reference>
<comment type="function">
    <text evidence="2">Involved in the maintenance of the Golgi structure.</text>
</comment>
<comment type="subunit">
    <text evidence="2 4">Interacts with YIPF3 and YIPF5.</text>
</comment>
<comment type="subunit">
    <text evidence="3">(Microbial infection) Interacts with human papillomavirus (HPV) E5 proteins.</text>
</comment>
<comment type="interaction">
    <interactant intactId="EBI-751253">
        <id>Q9BSR8</id>
    </interactant>
    <interactant intactId="EBI-13059134">
        <id>Q13520</id>
        <label>AQP6</label>
    </interactant>
    <organismsDiffer>false</organismsDiffer>
    <experiments>3</experiments>
</comment>
<comment type="interaction">
    <interactant intactId="EBI-751253">
        <id>Q9BSR8</id>
    </interactant>
    <interactant intactId="EBI-714543">
        <id>Q15041</id>
        <label>ARL6IP1</label>
    </interactant>
    <organismsDiffer>false</organismsDiffer>
    <experiments>3</experiments>
</comment>
<comment type="interaction">
    <interactant intactId="EBI-751253">
        <id>Q9BSR8</id>
    </interactant>
    <interactant intactId="EBI-7797864">
        <id>P11912</id>
        <label>CD79A</label>
    </interactant>
    <organismsDiffer>false</organismsDiffer>
    <experiments>3</experiments>
</comment>
<comment type="interaction">
    <interactant intactId="EBI-751253">
        <id>Q9BSR8</id>
    </interactant>
    <interactant intactId="EBI-2835940">
        <id>P34972</id>
        <label>CNR2</label>
    </interactant>
    <organismsDiffer>false</organismsDiffer>
    <experiments>3</experiments>
</comment>
<comment type="interaction">
    <interactant intactId="EBI-751253">
        <id>Q9BSR8</id>
    </interactant>
    <interactant intactId="EBI-3915253">
        <id>Q15125</id>
        <label>EBP</label>
    </interactant>
    <organismsDiffer>false</organismsDiffer>
    <experiments>3</experiments>
</comment>
<comment type="interaction">
    <interactant intactId="EBI-751253">
        <id>Q9BSR8</id>
    </interactant>
    <interactant intactId="EBI-781551">
        <id>Q9Y282</id>
        <label>ERGIC3</label>
    </interactant>
    <organismsDiffer>false</organismsDiffer>
    <experiments>3</experiments>
</comment>
<comment type="interaction">
    <interactant intactId="EBI-751253">
        <id>Q9BSR8</id>
    </interactant>
    <interactant intactId="EBI-743099">
        <id>Q969F0</id>
        <label>FATE1</label>
    </interactant>
    <organismsDiffer>false</organismsDiffer>
    <experiments>6</experiments>
</comment>
<comment type="interaction">
    <interactant intactId="EBI-751253">
        <id>Q9BSR8</id>
    </interactant>
    <interactant intactId="EBI-13345167">
        <id>Q8TDT2</id>
        <label>GPR152</label>
    </interactant>
    <organismsDiffer>false</organismsDiffer>
    <experiments>3</experiments>
</comment>
<comment type="interaction">
    <interactant intactId="EBI-751253">
        <id>Q9BSR8</id>
    </interactant>
    <interactant intactId="EBI-18076404">
        <id>O15529</id>
        <label>GPR42</label>
    </interactant>
    <organismsDiffer>false</organismsDiffer>
    <experiments>3</experiments>
</comment>
<comment type="interaction">
    <interactant intactId="EBI-751253">
        <id>Q9BSR8</id>
    </interactant>
    <interactant intactId="EBI-18053395">
        <id>Q7Z5P4</id>
        <label>HSD17B13</label>
    </interactant>
    <organismsDiffer>false</organismsDiffer>
    <experiments>3</experiments>
</comment>
<comment type="interaction">
    <interactant intactId="EBI-751253">
        <id>Q9BSR8</id>
    </interactant>
    <interactant intactId="EBI-725665">
        <id>Q9Y5U9</id>
        <label>IER3IP1</label>
    </interactant>
    <organismsDiffer>false</organismsDiffer>
    <experiments>3</experiments>
</comment>
<comment type="interaction">
    <interactant intactId="EBI-751253">
        <id>Q9BSR8</id>
    </interactant>
    <interactant intactId="EBI-373355">
        <id>Q5SR56</id>
        <label>MFSD14B</label>
    </interactant>
    <organismsDiffer>false</organismsDiffer>
    <experiments>3</experiments>
</comment>
<comment type="interaction">
    <interactant intactId="EBI-751253">
        <id>Q9BSR8</id>
    </interactant>
    <interactant intactId="EBI-2863634">
        <id>Q9UHE5</id>
        <label>NAT8</label>
    </interactant>
    <organismsDiffer>false</organismsDiffer>
    <experiments>3</experiments>
</comment>
<comment type="interaction">
    <interactant intactId="EBI-751253">
        <id>Q9BSR8</id>
    </interactant>
    <interactant intactId="EBI-7545592">
        <id>Q9H6H4</id>
        <label>REEP4</label>
    </interactant>
    <organismsDiffer>false</organismsDiffer>
    <experiments>3</experiments>
</comment>
<comment type="interaction">
    <interactant intactId="EBI-751253">
        <id>Q9BSR8</id>
    </interactant>
    <interactant intactId="EBI-2340249">
        <id>Q96GF1</id>
        <label>RNF185</label>
    </interactant>
    <organismsDiffer>false</organismsDiffer>
    <experiments>3</experiments>
</comment>
<comment type="interaction">
    <interactant intactId="EBI-751253">
        <id>Q9BSR8</id>
    </interactant>
    <interactant intactId="EBI-348482">
        <id>Q99942</id>
        <label>RNF5</label>
    </interactant>
    <organismsDiffer>false</organismsDiffer>
    <experiments>3</experiments>
</comment>
<comment type="interaction">
    <interactant intactId="EBI-751253">
        <id>Q9BSR8</id>
    </interactant>
    <interactant intactId="EBI-17247926">
        <id>Q9NY72</id>
        <label>SCN3B</label>
    </interactant>
    <organismsDiffer>false</organismsDiffer>
    <experiments>3</experiments>
</comment>
<comment type="interaction">
    <interactant intactId="EBI-751253">
        <id>Q9BSR8</id>
    </interactant>
    <interactant intactId="EBI-3923031">
        <id>Q14973</id>
        <label>SLC10A1</label>
    </interactant>
    <organismsDiffer>false</organismsDiffer>
    <experiments>3</experiments>
</comment>
<comment type="interaction">
    <interactant intactId="EBI-751253">
        <id>Q9BSR8</id>
    </interactant>
    <interactant intactId="EBI-17595455">
        <id>P54219-3</id>
        <label>SLC18A1</label>
    </interactant>
    <organismsDiffer>false</organismsDiffer>
    <experiments>3</experiments>
</comment>
<comment type="interaction">
    <interactant intactId="EBI-751253">
        <id>Q9BSR8</id>
    </interactant>
    <interactant intactId="EBI-10262251">
        <id>Q8IWU4</id>
        <label>SLC30A8</label>
    </interactant>
    <organismsDiffer>false</organismsDiffer>
    <experiments>3</experiments>
</comment>
<comment type="interaction">
    <interactant intactId="EBI-751253">
        <id>Q9BSR8</id>
    </interactant>
    <interactant intactId="EBI-12363689">
        <id>Q96G79</id>
        <label>SLC35A4</label>
    </interactant>
    <organismsDiffer>false</organismsDiffer>
    <experiments>3</experiments>
</comment>
<comment type="interaction">
    <interactant intactId="EBI-751253">
        <id>Q9BSR8</id>
    </interactant>
    <interactant intactId="EBI-17295964">
        <id>Q9NQQ7-3</id>
        <label>SLC35C2</label>
    </interactant>
    <organismsDiffer>false</organismsDiffer>
    <experiments>3</experiments>
</comment>
<comment type="interaction">
    <interactant intactId="EBI-751253">
        <id>Q9BSR8</id>
    </interactant>
    <interactant intactId="EBI-4289564">
        <id>P30825</id>
        <label>SLC7A1</label>
    </interactant>
    <organismsDiffer>false</organismsDiffer>
    <experiments>4</experiments>
</comment>
<comment type="interaction">
    <interactant intactId="EBI-751253">
        <id>Q9BSR8</id>
    </interactant>
    <interactant intactId="EBI-5235586">
        <id>Q8TBB6</id>
        <label>SLC7A14</label>
    </interactant>
    <organismsDiffer>false</organismsDiffer>
    <experiments>3</experiments>
</comment>
<comment type="interaction">
    <interactant intactId="EBI-751253">
        <id>Q9BSR8</id>
    </interactant>
    <interactant intactId="EBI-12947623">
        <id>Q96MV1</id>
        <label>TLCD4</label>
    </interactant>
    <organismsDiffer>false</organismsDiffer>
    <experiments>3</experiments>
</comment>
<comment type="interaction">
    <interactant intactId="EBI-751253">
        <id>Q9BSR8</id>
    </interactant>
    <interactant intactId="EBI-8638294">
        <id>Q9NUH8</id>
        <label>TMEM14B</label>
    </interactant>
    <organismsDiffer>false</organismsDiffer>
    <experiments>3</experiments>
</comment>
<comment type="interaction">
    <interactant intactId="EBI-751253">
        <id>Q9BSR8</id>
    </interactant>
    <interactant intactId="EBI-12003468">
        <id>A0AVG3</id>
        <label>TSNARE1</label>
    </interactant>
    <organismsDiffer>false</organismsDiffer>
    <experiments>3</experiments>
</comment>
<comment type="interaction">
    <interactant intactId="EBI-751253">
        <id>Q9BSR8</id>
    </interactant>
    <interactant intactId="EBI-11343401">
        <id>Q9NYZ1</id>
        <label>TVP23B</label>
    </interactant>
    <organismsDiffer>false</organismsDiffer>
    <experiments>3</experiments>
</comment>
<comment type="interaction">
    <interactant intactId="EBI-751253">
        <id>Q9BSR8</id>
    </interactant>
    <interactant intactId="EBI-2799703">
        <id>O95070</id>
        <label>YIF1A</label>
    </interactant>
    <organismsDiffer>false</organismsDiffer>
    <experiments>3</experiments>
</comment>
<comment type="interaction">
    <interactant intactId="EBI-751253">
        <id>Q9BSR8</id>
    </interactant>
    <interactant intactId="EBI-743787">
        <id>Q9GZM5</id>
        <label>YIPF3</label>
    </interactant>
    <organismsDiffer>false</organismsDiffer>
    <experiments>10</experiments>
</comment>
<comment type="interaction">
    <interactant intactId="EBI-751253">
        <id>Q9BSR8</id>
    </interactant>
    <interactant intactId="EBI-12837904">
        <id>Q96MV8</id>
        <label>ZDHHC15</label>
    </interactant>
    <organismsDiffer>false</organismsDiffer>
    <experiments>3</experiments>
</comment>
<comment type="subcellular location">
    <subcellularLocation>
        <location evidence="2 3 4">Golgi apparatus</location>
        <location evidence="2 3 4">cis-Golgi network membrane</location>
        <topology evidence="2">Multi-pass membrane protein</topology>
    </subcellularLocation>
</comment>
<comment type="tissue specificity">
    <text evidence="3">Expressed in keratinocytes (at protein level).</text>
</comment>
<comment type="developmental stage">
    <text evidence="3">In primary foreskin keratinocytes, down-regulated during calcium-induced differentiation (at protein level). The physiological relevance of this observation is unclear as YIPF4 protein is expressed throughout the epithelial layers in organotypic raft cultures, a cell-culture model of stratified epithelium.</text>
</comment>
<comment type="developmental stage">
    <text evidence="3">(Microbial infection) Down-regulation upon calcium-induced keratinocyte differentiation is prevented in the presence of human papillomavirus (HPV), independently of HPV E5 protein (at protein level). The physiological relevance of this observation is unclear.</text>
</comment>
<comment type="similarity">
    <text evidence="5">Belongs to the YIP1 family.</text>
</comment>
<evidence type="ECO:0000255" key="1"/>
<evidence type="ECO:0000269" key="2">
    <source>
    </source>
</evidence>
<evidence type="ECO:0000269" key="3">
    <source>
    </source>
</evidence>
<evidence type="ECO:0000269" key="4">
    <source>
    </source>
</evidence>
<evidence type="ECO:0000305" key="5"/>
<evidence type="ECO:0000305" key="6">
    <source>
    </source>
</evidence>
<feature type="chain" id="PRO_0000242632" description="Protein YIPF4">
    <location>
        <begin position="1"/>
        <end position="244"/>
    </location>
</feature>
<feature type="topological domain" description="Cytoplasmic" evidence="6">
    <location>
        <begin position="1"/>
        <end position="113"/>
    </location>
</feature>
<feature type="transmembrane region" description="Helical" evidence="1">
    <location>
        <begin position="114"/>
        <end position="134"/>
    </location>
</feature>
<feature type="topological domain" description="Extracellular" evidence="5">
    <location>
        <begin position="135"/>
        <end position="138"/>
    </location>
</feature>
<feature type="transmembrane region" description="Helical" evidence="1">
    <location>
        <begin position="139"/>
        <end position="159"/>
    </location>
</feature>
<feature type="topological domain" description="Cytoplasmic" evidence="5">
    <location>
        <begin position="160"/>
        <end position="166"/>
    </location>
</feature>
<feature type="transmembrane region" description="Helical" evidence="1">
    <location>
        <begin position="167"/>
        <end position="187"/>
    </location>
</feature>
<feature type="topological domain" description="Extracellular" evidence="5">
    <location>
        <begin position="188"/>
        <end position="195"/>
    </location>
</feature>
<feature type="transmembrane region" description="Helical" evidence="1">
    <location>
        <begin position="196"/>
        <end position="216"/>
    </location>
</feature>
<feature type="topological domain" description="Cytoplasmic" evidence="5">
    <location>
        <begin position="217"/>
        <end position="223"/>
    </location>
</feature>
<feature type="transmembrane region" description="Helical" evidence="1">
    <location>
        <begin position="224"/>
        <end position="244"/>
    </location>
</feature>
<protein>
    <recommendedName>
        <fullName>Protein YIPF4</fullName>
    </recommendedName>
    <alternativeName>
        <fullName>YIP1 family member 4</fullName>
    </alternativeName>
</protein>
<keyword id="KW-0333">Golgi apparatus</keyword>
<keyword id="KW-0945">Host-virus interaction</keyword>
<keyword id="KW-0472">Membrane</keyword>
<keyword id="KW-1267">Proteomics identification</keyword>
<keyword id="KW-1185">Reference proteome</keyword>
<keyword id="KW-0812">Transmembrane</keyword>
<keyword id="KW-1133">Transmembrane helix</keyword>
<gene>
    <name type="primary">YIPF4</name>
    <name type="ORF">Nbla11189</name>
</gene>
<accession>Q9BSR8</accession>
<name>YIPF4_HUMAN</name>
<dbReference type="EMBL" id="AB072898">
    <property type="protein sequence ID" value="BAE45710.1"/>
    <property type="molecule type" value="mRNA"/>
</dbReference>
<dbReference type="EMBL" id="AK098486">
    <property type="protein sequence ID" value="BAC05315.1"/>
    <property type="molecule type" value="mRNA"/>
</dbReference>
<dbReference type="EMBL" id="BC004875">
    <property type="protein sequence ID" value="AAH04875.1"/>
    <property type="molecule type" value="mRNA"/>
</dbReference>
<dbReference type="CCDS" id="CCDS1781.1"/>
<dbReference type="RefSeq" id="NP_115688.1">
    <property type="nucleotide sequence ID" value="NM_032312.4"/>
</dbReference>
<dbReference type="BioGRID" id="123999">
    <property type="interactions" value="79"/>
</dbReference>
<dbReference type="FunCoup" id="Q9BSR8">
    <property type="interactions" value="2572"/>
</dbReference>
<dbReference type="IntAct" id="Q9BSR8">
    <property type="interactions" value="53"/>
</dbReference>
<dbReference type="MINT" id="Q9BSR8"/>
<dbReference type="STRING" id="9606.ENSP00000238831"/>
<dbReference type="TCDB" id="9.B.135.1.7">
    <property type="family name" value="the membrane trafficking yip (yip) family"/>
</dbReference>
<dbReference type="iPTMnet" id="Q9BSR8"/>
<dbReference type="PhosphoSitePlus" id="Q9BSR8"/>
<dbReference type="SwissPalm" id="Q9BSR8"/>
<dbReference type="BioMuta" id="YIPF4"/>
<dbReference type="DMDM" id="74733045"/>
<dbReference type="jPOST" id="Q9BSR8"/>
<dbReference type="MassIVE" id="Q9BSR8"/>
<dbReference type="PaxDb" id="9606-ENSP00000238831"/>
<dbReference type="PeptideAtlas" id="Q9BSR8"/>
<dbReference type="ProteomicsDB" id="78921"/>
<dbReference type="Pumba" id="Q9BSR8"/>
<dbReference type="Antibodypedia" id="14283">
    <property type="antibodies" value="93 antibodies from 24 providers"/>
</dbReference>
<dbReference type="DNASU" id="84272"/>
<dbReference type="Ensembl" id="ENST00000238831.9">
    <property type="protein sequence ID" value="ENSP00000238831.3"/>
    <property type="gene ID" value="ENSG00000119820.11"/>
</dbReference>
<dbReference type="GeneID" id="84272"/>
<dbReference type="KEGG" id="hsa:84272"/>
<dbReference type="MANE-Select" id="ENST00000238831.9">
    <property type="protein sequence ID" value="ENSP00000238831.3"/>
    <property type="RefSeq nucleotide sequence ID" value="NM_032312.4"/>
    <property type="RefSeq protein sequence ID" value="NP_115688.1"/>
</dbReference>
<dbReference type="UCSC" id="uc002rok.4">
    <property type="organism name" value="human"/>
</dbReference>
<dbReference type="AGR" id="HGNC:28145"/>
<dbReference type="CTD" id="84272"/>
<dbReference type="DisGeNET" id="84272"/>
<dbReference type="GeneCards" id="YIPF4"/>
<dbReference type="HGNC" id="HGNC:28145">
    <property type="gene designation" value="YIPF4"/>
</dbReference>
<dbReference type="HPA" id="ENSG00000119820">
    <property type="expression patterns" value="Low tissue specificity"/>
</dbReference>
<dbReference type="MIM" id="617534">
    <property type="type" value="gene"/>
</dbReference>
<dbReference type="neXtProt" id="NX_Q9BSR8"/>
<dbReference type="OpenTargets" id="ENSG00000119820"/>
<dbReference type="PharmGKB" id="PA142670547"/>
<dbReference type="VEuPathDB" id="HostDB:ENSG00000119820"/>
<dbReference type="eggNOG" id="KOG3103">
    <property type="taxonomic scope" value="Eukaryota"/>
</dbReference>
<dbReference type="GeneTree" id="ENSGT00940000153168"/>
<dbReference type="HOGENOM" id="CLU_072083_0_0_1"/>
<dbReference type="InParanoid" id="Q9BSR8"/>
<dbReference type="OMA" id="SWIITMW"/>
<dbReference type="OrthoDB" id="411251at2759"/>
<dbReference type="PAN-GO" id="Q9BSR8">
    <property type="GO annotations" value="3 GO annotations based on evolutionary models"/>
</dbReference>
<dbReference type="PhylomeDB" id="Q9BSR8"/>
<dbReference type="TreeFam" id="TF315055"/>
<dbReference type="PathwayCommons" id="Q9BSR8"/>
<dbReference type="SignaLink" id="Q9BSR8"/>
<dbReference type="BioGRID-ORCS" id="84272">
    <property type="hits" value="12 hits in 1120 CRISPR screens"/>
</dbReference>
<dbReference type="ChiTaRS" id="YIPF4">
    <property type="organism name" value="human"/>
</dbReference>
<dbReference type="GeneWiki" id="YIPF4"/>
<dbReference type="GenomeRNAi" id="84272"/>
<dbReference type="Pharos" id="Q9BSR8">
    <property type="development level" value="Tbio"/>
</dbReference>
<dbReference type="PRO" id="PR:Q9BSR8"/>
<dbReference type="Proteomes" id="UP000005640">
    <property type="component" value="Chromosome 2"/>
</dbReference>
<dbReference type="RNAct" id="Q9BSR8">
    <property type="molecule type" value="protein"/>
</dbReference>
<dbReference type="Bgee" id="ENSG00000119820">
    <property type="expression patterns" value="Expressed in calcaneal tendon and 185 other cell types or tissues"/>
</dbReference>
<dbReference type="ExpressionAtlas" id="Q9BSR8">
    <property type="expression patterns" value="baseline and differential"/>
</dbReference>
<dbReference type="GO" id="GO:0005783">
    <property type="term" value="C:endoplasmic reticulum"/>
    <property type="evidence" value="ECO:0000314"/>
    <property type="project" value="LIFEdb"/>
</dbReference>
<dbReference type="GO" id="GO:0005794">
    <property type="term" value="C:Golgi apparatus"/>
    <property type="evidence" value="ECO:0000314"/>
    <property type="project" value="HPA"/>
</dbReference>
<dbReference type="GO" id="GO:0043231">
    <property type="term" value="C:intracellular membrane-bounded organelle"/>
    <property type="evidence" value="ECO:0000314"/>
    <property type="project" value="HPA"/>
</dbReference>
<dbReference type="GO" id="GO:0005886">
    <property type="term" value="C:plasma membrane"/>
    <property type="evidence" value="ECO:0000314"/>
    <property type="project" value="HPA"/>
</dbReference>
<dbReference type="GO" id="GO:0005802">
    <property type="term" value="C:trans-Golgi network"/>
    <property type="evidence" value="ECO:0000318"/>
    <property type="project" value="GO_Central"/>
</dbReference>
<dbReference type="GO" id="GO:0006888">
    <property type="term" value="P:endoplasmic reticulum to Golgi vesicle-mediated transport"/>
    <property type="evidence" value="ECO:0000318"/>
    <property type="project" value="GO_Central"/>
</dbReference>
<dbReference type="GO" id="GO:0048280">
    <property type="term" value="P:vesicle fusion with Golgi apparatus"/>
    <property type="evidence" value="ECO:0000318"/>
    <property type="project" value="GO_Central"/>
</dbReference>
<dbReference type="InterPro" id="IPR045231">
    <property type="entry name" value="Yip1/4-like"/>
</dbReference>
<dbReference type="InterPro" id="IPR006977">
    <property type="entry name" value="Yip1_dom"/>
</dbReference>
<dbReference type="PANTHER" id="PTHR21236">
    <property type="entry name" value="GOLGI MEMBRANE PROTEIN YIP1"/>
    <property type="match status" value="1"/>
</dbReference>
<dbReference type="PANTHER" id="PTHR21236:SF7">
    <property type="entry name" value="PROTEIN YIPF4"/>
    <property type="match status" value="1"/>
</dbReference>
<dbReference type="Pfam" id="PF04893">
    <property type="entry name" value="Yip1"/>
    <property type="match status" value="1"/>
</dbReference>
<sequence length="244" mass="27083">MQPPGPPPAYAPTNGDFTFVSSADAEDLSGSIASPDVKLNLGGDFIKESTATTFLRQRGYGWLLEVEDDDPEDNKPLLEELDIDLKDIYYKIRCVLMPMPSLGFNRQVVRDNPDFWGPLAVVLFFSMISLYGQFRVVSWIITIWIFGSLTIFLLARVLGGEVAYGQVLGVIGYSLLPLIVIAPVLLVVGSFEVVSTLIKLFGVFWAAYSAASLLVGEEFKTKKPLLIYPIFLLYIYFLSLYTGV</sequence>